<reference key="1">
    <citation type="journal article" date="2009" name="J. Bacteriol.">
        <title>Complete and draft genome sequences of six members of the Aquificales.</title>
        <authorList>
            <person name="Reysenbach A.-L."/>
            <person name="Hamamura N."/>
            <person name="Podar M."/>
            <person name="Griffiths E."/>
            <person name="Ferreira S."/>
            <person name="Hochstein R."/>
            <person name="Heidelberg J."/>
            <person name="Johnson J."/>
            <person name="Mead D."/>
            <person name="Pohorille A."/>
            <person name="Sarmiento M."/>
            <person name="Schweighofer K."/>
            <person name="Seshadri R."/>
            <person name="Voytek M.A."/>
        </authorList>
    </citation>
    <scope>NUCLEOTIDE SEQUENCE [LARGE SCALE GENOMIC DNA]</scope>
    <source>
        <strain>Y04AAS1</strain>
    </source>
</reference>
<name>RNPH_HYDS0</name>
<dbReference type="EC" id="2.7.7.56" evidence="1"/>
<dbReference type="EMBL" id="CP001130">
    <property type="protein sequence ID" value="ACG57544.1"/>
    <property type="molecule type" value="Genomic_DNA"/>
</dbReference>
<dbReference type="RefSeq" id="WP_012513900.1">
    <property type="nucleotide sequence ID" value="NC_011126.1"/>
</dbReference>
<dbReference type="SMR" id="B4U8T3"/>
<dbReference type="STRING" id="380749.HY04AAS1_0857"/>
<dbReference type="KEGG" id="hya:HY04AAS1_0857"/>
<dbReference type="eggNOG" id="COG0689">
    <property type="taxonomic scope" value="Bacteria"/>
</dbReference>
<dbReference type="HOGENOM" id="CLU_050858_0_0_0"/>
<dbReference type="OrthoDB" id="9807456at2"/>
<dbReference type="GO" id="GO:0000175">
    <property type="term" value="F:3'-5'-RNA exonuclease activity"/>
    <property type="evidence" value="ECO:0007669"/>
    <property type="project" value="UniProtKB-UniRule"/>
</dbReference>
<dbReference type="GO" id="GO:0000049">
    <property type="term" value="F:tRNA binding"/>
    <property type="evidence" value="ECO:0007669"/>
    <property type="project" value="UniProtKB-UniRule"/>
</dbReference>
<dbReference type="GO" id="GO:0009022">
    <property type="term" value="F:tRNA nucleotidyltransferase activity"/>
    <property type="evidence" value="ECO:0007669"/>
    <property type="project" value="UniProtKB-UniRule"/>
</dbReference>
<dbReference type="GO" id="GO:0016075">
    <property type="term" value="P:rRNA catabolic process"/>
    <property type="evidence" value="ECO:0007669"/>
    <property type="project" value="UniProtKB-UniRule"/>
</dbReference>
<dbReference type="GO" id="GO:0006364">
    <property type="term" value="P:rRNA processing"/>
    <property type="evidence" value="ECO:0007669"/>
    <property type="project" value="UniProtKB-KW"/>
</dbReference>
<dbReference type="GO" id="GO:0008033">
    <property type="term" value="P:tRNA processing"/>
    <property type="evidence" value="ECO:0007669"/>
    <property type="project" value="UniProtKB-UniRule"/>
</dbReference>
<dbReference type="CDD" id="cd11362">
    <property type="entry name" value="RNase_PH_bact"/>
    <property type="match status" value="1"/>
</dbReference>
<dbReference type="FunFam" id="3.30.230.70:FF:000003">
    <property type="entry name" value="Ribonuclease PH"/>
    <property type="match status" value="1"/>
</dbReference>
<dbReference type="Gene3D" id="3.30.230.70">
    <property type="entry name" value="GHMP Kinase, N-terminal domain"/>
    <property type="match status" value="1"/>
</dbReference>
<dbReference type="HAMAP" id="MF_00564">
    <property type="entry name" value="RNase_PH"/>
    <property type="match status" value="1"/>
</dbReference>
<dbReference type="InterPro" id="IPR001247">
    <property type="entry name" value="ExoRNase_PH_dom1"/>
</dbReference>
<dbReference type="InterPro" id="IPR015847">
    <property type="entry name" value="ExoRNase_PH_dom2"/>
</dbReference>
<dbReference type="InterPro" id="IPR036345">
    <property type="entry name" value="ExoRNase_PH_dom2_sf"/>
</dbReference>
<dbReference type="InterPro" id="IPR027408">
    <property type="entry name" value="PNPase/RNase_PH_dom_sf"/>
</dbReference>
<dbReference type="InterPro" id="IPR020568">
    <property type="entry name" value="Ribosomal_Su5_D2-typ_SF"/>
</dbReference>
<dbReference type="InterPro" id="IPR050080">
    <property type="entry name" value="RNase_PH"/>
</dbReference>
<dbReference type="InterPro" id="IPR002381">
    <property type="entry name" value="RNase_PH_bac-type"/>
</dbReference>
<dbReference type="InterPro" id="IPR018336">
    <property type="entry name" value="RNase_PH_CS"/>
</dbReference>
<dbReference type="NCBIfam" id="TIGR01966">
    <property type="entry name" value="RNasePH"/>
    <property type="match status" value="1"/>
</dbReference>
<dbReference type="PANTHER" id="PTHR11953">
    <property type="entry name" value="EXOSOME COMPLEX COMPONENT"/>
    <property type="match status" value="1"/>
</dbReference>
<dbReference type="PANTHER" id="PTHR11953:SF0">
    <property type="entry name" value="EXOSOME COMPLEX COMPONENT RRP41"/>
    <property type="match status" value="1"/>
</dbReference>
<dbReference type="Pfam" id="PF01138">
    <property type="entry name" value="RNase_PH"/>
    <property type="match status" value="1"/>
</dbReference>
<dbReference type="Pfam" id="PF03725">
    <property type="entry name" value="RNase_PH_C"/>
    <property type="match status" value="1"/>
</dbReference>
<dbReference type="SUPFAM" id="SSF55666">
    <property type="entry name" value="Ribonuclease PH domain 2-like"/>
    <property type="match status" value="1"/>
</dbReference>
<dbReference type="SUPFAM" id="SSF54211">
    <property type="entry name" value="Ribosomal protein S5 domain 2-like"/>
    <property type="match status" value="1"/>
</dbReference>
<dbReference type="PROSITE" id="PS01277">
    <property type="entry name" value="RIBONUCLEASE_PH"/>
    <property type="match status" value="1"/>
</dbReference>
<keyword id="KW-0548">Nucleotidyltransferase</keyword>
<keyword id="KW-0694">RNA-binding</keyword>
<keyword id="KW-0698">rRNA processing</keyword>
<keyword id="KW-0808">Transferase</keyword>
<keyword id="KW-0819">tRNA processing</keyword>
<keyword id="KW-0820">tRNA-binding</keyword>
<sequence>MRKNNRKLDELRPIRIQRDFNIHAEGSCLVEFGNTRVICTASIAESVPPFLKGKNQGWITAEYSMLPRATATRNMRESVTGKIGGRTHEIQRMIGRAMRAVIDLTKIGERTIWIDCDVIQADGGTRTASIVGAFIAMTDAIIKLNEQKLINSVPIRDTVGAVSVGIVNDRLMLDLDFEEDSNAAVDMTIVATGNGEMVEIHSLGEEATYTRKEFEAMLDLGLESLKQIAELQNVFYEKMPSINLWKRKSVKEAKL</sequence>
<protein>
    <recommendedName>
        <fullName evidence="1">Ribonuclease PH</fullName>
        <shortName evidence="1">RNase PH</shortName>
        <ecNumber evidence="1">2.7.7.56</ecNumber>
    </recommendedName>
    <alternativeName>
        <fullName evidence="1">tRNA nucleotidyltransferase</fullName>
    </alternativeName>
</protein>
<organism>
    <name type="scientific">Hydrogenobaculum sp. (strain Y04AAS1)</name>
    <dbReference type="NCBI Taxonomy" id="380749"/>
    <lineage>
        <taxon>Bacteria</taxon>
        <taxon>Pseudomonadati</taxon>
        <taxon>Aquificota</taxon>
        <taxon>Aquificia</taxon>
        <taxon>Aquificales</taxon>
        <taxon>Aquificaceae</taxon>
        <taxon>Hydrogenobaculum</taxon>
    </lineage>
</organism>
<evidence type="ECO:0000255" key="1">
    <source>
        <dbReference type="HAMAP-Rule" id="MF_00564"/>
    </source>
</evidence>
<feature type="chain" id="PRO_1000129347" description="Ribonuclease PH">
    <location>
        <begin position="1"/>
        <end position="255"/>
    </location>
</feature>
<feature type="binding site" evidence="1">
    <location>
        <position position="86"/>
    </location>
    <ligand>
        <name>phosphate</name>
        <dbReference type="ChEBI" id="CHEBI:43474"/>
        <note>substrate</note>
    </ligand>
</feature>
<feature type="binding site" evidence="1">
    <location>
        <begin position="124"/>
        <end position="126"/>
    </location>
    <ligand>
        <name>phosphate</name>
        <dbReference type="ChEBI" id="CHEBI:43474"/>
        <note>substrate</note>
    </ligand>
</feature>
<accession>B4U8T3</accession>
<comment type="function">
    <text evidence="1">Phosphorolytic 3'-5' exoribonuclease that plays an important role in tRNA 3'-end maturation. Removes nucleotide residues following the 3'-CCA terminus of tRNAs; can also add nucleotides to the ends of RNA molecules by using nucleoside diphosphates as substrates, but this may not be physiologically important. Probably plays a role in initiation of 16S rRNA degradation (leading to ribosome degradation) during starvation.</text>
</comment>
<comment type="catalytic activity">
    <reaction evidence="1">
        <text>tRNA(n+1) + phosphate = tRNA(n) + a ribonucleoside 5'-diphosphate</text>
        <dbReference type="Rhea" id="RHEA:10628"/>
        <dbReference type="Rhea" id="RHEA-COMP:17343"/>
        <dbReference type="Rhea" id="RHEA-COMP:17344"/>
        <dbReference type="ChEBI" id="CHEBI:43474"/>
        <dbReference type="ChEBI" id="CHEBI:57930"/>
        <dbReference type="ChEBI" id="CHEBI:173114"/>
        <dbReference type="EC" id="2.7.7.56"/>
    </reaction>
</comment>
<comment type="subunit">
    <text evidence="1">Homohexameric ring arranged as a trimer of dimers.</text>
</comment>
<comment type="similarity">
    <text evidence="1">Belongs to the RNase PH family.</text>
</comment>
<proteinExistence type="inferred from homology"/>
<gene>
    <name evidence="1" type="primary">rph</name>
    <name type="ordered locus">HY04AAS1_0857</name>
</gene>